<reference key="1">
    <citation type="submission" date="1997-03" db="EMBL/GenBank/DDBJ databases">
        <title>S.pombe ribosomal protein YL16 homolog.</title>
        <authorList>
            <person name="Kawamukai M."/>
        </authorList>
    </citation>
    <scope>NUCLEOTIDE SEQUENCE [MRNA]</scope>
</reference>
<reference key="2">
    <citation type="journal article" date="2002" name="Nature">
        <title>The genome sequence of Schizosaccharomyces pombe.</title>
        <authorList>
            <person name="Wood V."/>
            <person name="Gwilliam R."/>
            <person name="Rajandream M.A."/>
            <person name="Lyne M.H."/>
            <person name="Lyne R."/>
            <person name="Stewart A."/>
            <person name="Sgouros J.G."/>
            <person name="Peat N."/>
            <person name="Hayles J."/>
            <person name="Baker S.G."/>
            <person name="Basham D."/>
            <person name="Bowman S."/>
            <person name="Brooks K."/>
            <person name="Brown D."/>
            <person name="Brown S."/>
            <person name="Chillingworth T."/>
            <person name="Churcher C.M."/>
            <person name="Collins M."/>
            <person name="Connor R."/>
            <person name="Cronin A."/>
            <person name="Davis P."/>
            <person name="Feltwell T."/>
            <person name="Fraser A."/>
            <person name="Gentles S."/>
            <person name="Goble A."/>
            <person name="Hamlin N."/>
            <person name="Harris D.E."/>
            <person name="Hidalgo J."/>
            <person name="Hodgson G."/>
            <person name="Holroyd S."/>
            <person name="Hornsby T."/>
            <person name="Howarth S."/>
            <person name="Huckle E.J."/>
            <person name="Hunt S."/>
            <person name="Jagels K."/>
            <person name="James K.D."/>
            <person name="Jones L."/>
            <person name="Jones M."/>
            <person name="Leather S."/>
            <person name="McDonald S."/>
            <person name="McLean J."/>
            <person name="Mooney P."/>
            <person name="Moule S."/>
            <person name="Mungall K.L."/>
            <person name="Murphy L.D."/>
            <person name="Niblett D."/>
            <person name="Odell C."/>
            <person name="Oliver K."/>
            <person name="O'Neil S."/>
            <person name="Pearson D."/>
            <person name="Quail M.A."/>
            <person name="Rabbinowitsch E."/>
            <person name="Rutherford K.M."/>
            <person name="Rutter S."/>
            <person name="Saunders D."/>
            <person name="Seeger K."/>
            <person name="Sharp S."/>
            <person name="Skelton J."/>
            <person name="Simmonds M.N."/>
            <person name="Squares R."/>
            <person name="Squares S."/>
            <person name="Stevens K."/>
            <person name="Taylor K."/>
            <person name="Taylor R.G."/>
            <person name="Tivey A."/>
            <person name="Walsh S.V."/>
            <person name="Warren T."/>
            <person name="Whitehead S."/>
            <person name="Woodward J.R."/>
            <person name="Volckaert G."/>
            <person name="Aert R."/>
            <person name="Robben J."/>
            <person name="Grymonprez B."/>
            <person name="Weltjens I."/>
            <person name="Vanstreels E."/>
            <person name="Rieger M."/>
            <person name="Schaefer M."/>
            <person name="Mueller-Auer S."/>
            <person name="Gabel C."/>
            <person name="Fuchs M."/>
            <person name="Duesterhoeft A."/>
            <person name="Fritzc C."/>
            <person name="Holzer E."/>
            <person name="Moestl D."/>
            <person name="Hilbert H."/>
            <person name="Borzym K."/>
            <person name="Langer I."/>
            <person name="Beck A."/>
            <person name="Lehrach H."/>
            <person name="Reinhardt R."/>
            <person name="Pohl T.M."/>
            <person name="Eger P."/>
            <person name="Zimmermann W."/>
            <person name="Wedler H."/>
            <person name="Wambutt R."/>
            <person name="Purnelle B."/>
            <person name="Goffeau A."/>
            <person name="Cadieu E."/>
            <person name="Dreano S."/>
            <person name="Gloux S."/>
            <person name="Lelaure V."/>
            <person name="Mottier S."/>
            <person name="Galibert F."/>
            <person name="Aves S.J."/>
            <person name="Xiang Z."/>
            <person name="Hunt C."/>
            <person name="Moore K."/>
            <person name="Hurst S.M."/>
            <person name="Lucas M."/>
            <person name="Rochet M."/>
            <person name="Gaillardin C."/>
            <person name="Tallada V.A."/>
            <person name="Garzon A."/>
            <person name="Thode G."/>
            <person name="Daga R.R."/>
            <person name="Cruzado L."/>
            <person name="Jimenez J."/>
            <person name="Sanchez M."/>
            <person name="del Rey F."/>
            <person name="Benito J."/>
            <person name="Dominguez A."/>
            <person name="Revuelta J.L."/>
            <person name="Moreno S."/>
            <person name="Armstrong J."/>
            <person name="Forsburg S.L."/>
            <person name="Cerutti L."/>
            <person name="Lowe T."/>
            <person name="McCombie W.R."/>
            <person name="Paulsen I."/>
            <person name="Potashkin J."/>
            <person name="Shpakovski G.V."/>
            <person name="Ussery D."/>
            <person name="Barrell B.G."/>
            <person name="Nurse P."/>
        </authorList>
    </citation>
    <scope>NUCLEOTIDE SEQUENCE [LARGE SCALE GENOMIC DNA]</scope>
    <source>
        <strain>972 / ATCC 24843</strain>
    </source>
</reference>
<reference key="3">
    <citation type="journal article" date="2006" name="Nat. Biotechnol.">
        <title>ORFeome cloning and global analysis of protein localization in the fission yeast Schizosaccharomyces pombe.</title>
        <authorList>
            <person name="Matsuyama A."/>
            <person name="Arai R."/>
            <person name="Yashiroda Y."/>
            <person name="Shirai A."/>
            <person name="Kamata A."/>
            <person name="Sekido S."/>
            <person name="Kobayashi Y."/>
            <person name="Hashimoto A."/>
            <person name="Hamamoto M."/>
            <person name="Hiraoka Y."/>
            <person name="Horinouchi S."/>
            <person name="Yoshida M."/>
        </authorList>
    </citation>
    <scope>SUBCELLULAR LOCATION [LARGE SCALE ANALYSIS]</scope>
</reference>
<reference key="4">
    <citation type="journal article" date="2008" name="J. Proteome Res.">
        <title>Phosphoproteome analysis of fission yeast.</title>
        <authorList>
            <person name="Wilson-Grady J.T."/>
            <person name="Villen J."/>
            <person name="Gygi S.P."/>
        </authorList>
    </citation>
    <scope>PHOSPHORYLATION [LARGE SCALE ANALYSIS] AT SER-105 AND SER-115</scope>
    <scope>IDENTIFICATION BY MASS SPECTROMETRY</scope>
</reference>
<proteinExistence type="evidence at protein level"/>
<keyword id="KW-0002">3D-structure</keyword>
<keyword id="KW-0963">Cytoplasm</keyword>
<keyword id="KW-0539">Nucleus</keyword>
<keyword id="KW-0597">Phosphoprotein</keyword>
<keyword id="KW-1185">Reference proteome</keyword>
<keyword id="KW-0687">Ribonucleoprotein</keyword>
<keyword id="KW-0689">Ribosomal protein</keyword>
<feature type="initiator methionine" description="Removed" evidence="1">
    <location>
        <position position="1"/>
    </location>
</feature>
<feature type="chain" id="PRO_0000171016" description="Large ribosomal subunit protein eL6">
    <location>
        <begin position="2"/>
        <end position="195"/>
    </location>
</feature>
<feature type="modified residue" description="Phosphoserine" evidence="4">
    <location>
        <position position="105"/>
    </location>
</feature>
<feature type="modified residue" description="Phosphoserine" evidence="4">
    <location>
        <position position="115"/>
    </location>
</feature>
<feature type="helix" evidence="8">
    <location>
        <begin position="50"/>
        <end position="52"/>
    </location>
</feature>
<feature type="strand" evidence="8">
    <location>
        <begin position="53"/>
        <end position="55"/>
    </location>
</feature>
<feature type="strand" evidence="9">
    <location>
        <begin position="57"/>
        <end position="60"/>
    </location>
</feature>
<feature type="turn" evidence="9">
    <location>
        <begin position="64"/>
        <end position="67"/>
    </location>
</feature>
<feature type="strand" evidence="9">
    <location>
        <begin position="68"/>
        <end position="75"/>
    </location>
</feature>
<feature type="strand" evidence="9">
    <location>
        <begin position="77"/>
        <end position="83"/>
    </location>
</feature>
<feature type="turn" evidence="9">
    <location>
        <begin position="86"/>
        <end position="88"/>
    </location>
</feature>
<feature type="strand" evidence="9">
    <location>
        <begin position="93"/>
        <end position="97"/>
    </location>
</feature>
<feature type="helix" evidence="9">
    <location>
        <begin position="98"/>
        <end position="100"/>
    </location>
</feature>
<feature type="strand" evidence="9">
    <location>
        <begin position="101"/>
        <end position="103"/>
    </location>
</feature>
<feature type="strand" evidence="9">
    <location>
        <begin position="112"/>
        <end position="114"/>
    </location>
</feature>
<feature type="helix" evidence="9">
    <location>
        <begin position="121"/>
        <end position="124"/>
    </location>
</feature>
<feature type="strand" evidence="7">
    <location>
        <begin position="130"/>
        <end position="132"/>
    </location>
</feature>
<feature type="turn" evidence="9">
    <location>
        <begin position="135"/>
        <end position="138"/>
    </location>
</feature>
<feature type="helix" evidence="9">
    <location>
        <begin position="139"/>
        <end position="141"/>
    </location>
</feature>
<feature type="turn" evidence="6">
    <location>
        <begin position="144"/>
        <end position="148"/>
    </location>
</feature>
<feature type="helix" evidence="9">
    <location>
        <begin position="151"/>
        <end position="170"/>
    </location>
</feature>
<feature type="helix" evidence="9">
    <location>
        <begin position="175"/>
        <end position="179"/>
    </location>
</feature>
<feature type="turn" evidence="9">
    <location>
        <begin position="190"/>
        <end position="192"/>
    </location>
</feature>
<gene>
    <name type="primary">rpl6</name>
    <name type="ORF">SPCC622.18</name>
</gene>
<evidence type="ECO:0000250" key="1"/>
<evidence type="ECO:0000250" key="2">
    <source>
        <dbReference type="UniProtKB" id="Q02326"/>
    </source>
</evidence>
<evidence type="ECO:0000269" key="3">
    <source>
    </source>
</evidence>
<evidence type="ECO:0000269" key="4">
    <source>
    </source>
</evidence>
<evidence type="ECO:0000305" key="5"/>
<evidence type="ECO:0007829" key="6">
    <source>
        <dbReference type="PDB" id="8ETC"/>
    </source>
</evidence>
<evidence type="ECO:0007829" key="7">
    <source>
        <dbReference type="PDB" id="8ETJ"/>
    </source>
</evidence>
<evidence type="ECO:0007829" key="8">
    <source>
        <dbReference type="PDB" id="8EUP"/>
    </source>
</evidence>
<evidence type="ECO:0007829" key="9">
    <source>
        <dbReference type="PDB" id="8EUY"/>
    </source>
</evidence>
<accession>P79071</accession>
<protein>
    <recommendedName>
        <fullName evidence="5">Large ribosomal subunit protein eL6</fullName>
    </recommendedName>
    <alternativeName>
        <fullName>60S ribosomal protein L6</fullName>
    </alternativeName>
</protein>
<organism>
    <name type="scientific">Schizosaccharomyces pombe (strain 972 / ATCC 24843)</name>
    <name type="common">Fission yeast</name>
    <dbReference type="NCBI Taxonomy" id="284812"/>
    <lineage>
        <taxon>Eukaryota</taxon>
        <taxon>Fungi</taxon>
        <taxon>Dikarya</taxon>
        <taxon>Ascomycota</taxon>
        <taxon>Taphrinomycotina</taxon>
        <taxon>Schizosaccharomycetes</taxon>
        <taxon>Schizosaccharomycetales</taxon>
        <taxon>Schizosaccharomycetaceae</taxon>
        <taxon>Schizosaccharomyces</taxon>
    </lineage>
</organism>
<comment type="function">
    <text evidence="2">Component of the ribosome, a large ribonucleoprotein complex responsible for the synthesis of proteins in the cell. The small ribosomal subunit (SSU) binds messenger RNAs (mRNAs) and translates the encoded message by selecting cognate aminoacyl-transfer RNA (tRNA) molecules. The large subunit (LSU) contains the ribosomal catalytic site termed the peptidyl transferase center (PTC), which catalyzes the formation of peptide bonds, thereby polymerizing the amino acids delivered by tRNAs into a polypeptide chain. The nascent polypeptides leave the ribosome through a tunnel in the LSU and interact with protein factors that function in enzymatic processing, targeting, and the membrane insertion of nascent chains at the exit of the ribosomal tunnel.</text>
</comment>
<comment type="subunit">
    <text evidence="2">Component of the large ribosomal subunit (LSU). Mature yeast ribosomes consist of a small (40S) and a large (60S) subunit. The 40S small subunit contains 1 molecule of ribosomal RNA (18S rRNA) and at least 33 different proteins. The large 60S subunit contains 3 rRNA molecules (25S, 5.8S and 5S rRNA) and at least 46 different proteins.</text>
</comment>
<comment type="subcellular location">
    <subcellularLocation>
        <location evidence="3">Cytoplasm</location>
    </subcellularLocation>
    <subcellularLocation>
        <location evidence="3">Nucleus</location>
    </subcellularLocation>
    <subcellularLocation>
        <location evidence="3">Nucleus</location>
        <location evidence="3">Nucleolus</location>
    </subcellularLocation>
</comment>
<comment type="similarity">
    <text evidence="5">Belongs to the eukaryotic ribosomal protein eL6 family.</text>
</comment>
<sequence>MSTVKVNGAKNGGERMVLPAGEAAAKYYPAYRENVPKKARKAVRPTKLRASLAPGTVCILLAGRFRGKRVVVLSQLEDTLVVTGPYKVNGVPIRRVNHRYVIATSAPKIDVSGVSVEKFTKAYFAKQKRSGPVKKDEAFFAENAPKNALPAERIADQKAVDAKLLPAIKAIPNMKEYLAASFALSNGDRPHLMKF</sequence>
<name>RL6_SCHPO</name>
<dbReference type="EMBL" id="AB001833">
    <property type="protein sequence ID" value="BAA19457.1"/>
    <property type="molecule type" value="mRNA"/>
</dbReference>
<dbReference type="EMBL" id="CU329672">
    <property type="protein sequence ID" value="CAA21874.1"/>
    <property type="molecule type" value="Genomic_DNA"/>
</dbReference>
<dbReference type="PIR" id="T41499">
    <property type="entry name" value="T41499"/>
</dbReference>
<dbReference type="RefSeq" id="NP_588190.1">
    <property type="nucleotide sequence ID" value="NM_001023180.2"/>
</dbReference>
<dbReference type="PDB" id="8ESQ">
    <property type="method" value="EM"/>
    <property type="resolution" value="2.80 A"/>
    <property type="chains" value="E=1-195"/>
</dbReference>
<dbReference type="PDB" id="8ESR">
    <property type="method" value="EM"/>
    <property type="resolution" value="3.20 A"/>
    <property type="chains" value="E=1-195"/>
</dbReference>
<dbReference type="PDB" id="8ETC">
    <property type="method" value="EM"/>
    <property type="resolution" value="3.10 A"/>
    <property type="chains" value="E=1-195"/>
</dbReference>
<dbReference type="PDB" id="8ETG">
    <property type="method" value="EM"/>
    <property type="resolution" value="3.40 A"/>
    <property type="chains" value="E=1-195"/>
</dbReference>
<dbReference type="PDB" id="8ETH">
    <property type="method" value="EM"/>
    <property type="resolution" value="3.80 A"/>
    <property type="chains" value="E=1-195"/>
</dbReference>
<dbReference type="PDB" id="8ETI">
    <property type="method" value="EM"/>
    <property type="resolution" value="3.70 A"/>
    <property type="chains" value="E=1-195"/>
</dbReference>
<dbReference type="PDB" id="8ETJ">
    <property type="method" value="EM"/>
    <property type="resolution" value="3.20 A"/>
    <property type="chains" value="E=1-195"/>
</dbReference>
<dbReference type="PDB" id="8EUG">
    <property type="method" value="EM"/>
    <property type="resolution" value="2.80 A"/>
    <property type="chains" value="E=1-195"/>
</dbReference>
<dbReference type="PDB" id="8EUI">
    <property type="method" value="EM"/>
    <property type="resolution" value="3.10 A"/>
    <property type="chains" value="E=1-195"/>
</dbReference>
<dbReference type="PDB" id="8EUP">
    <property type="method" value="EM"/>
    <property type="resolution" value="3.10 A"/>
    <property type="chains" value="E=1-195"/>
</dbReference>
<dbReference type="PDB" id="8EUY">
    <property type="method" value="EM"/>
    <property type="resolution" value="3.00 A"/>
    <property type="chains" value="E=1-195"/>
</dbReference>
<dbReference type="PDB" id="8EV3">
    <property type="method" value="EM"/>
    <property type="resolution" value="3.00 A"/>
    <property type="chains" value="E=1-195"/>
</dbReference>
<dbReference type="PDB" id="9AXT">
    <property type="method" value="EM"/>
    <property type="resolution" value="2.40 A"/>
    <property type="chains" value="BR=1-195"/>
</dbReference>
<dbReference type="PDB" id="9AXU">
    <property type="method" value="EM"/>
    <property type="resolution" value="1.94 A"/>
    <property type="chains" value="R=1-195"/>
</dbReference>
<dbReference type="PDB" id="9AXV">
    <property type="method" value="EM"/>
    <property type="resolution" value="2.40 A"/>
    <property type="chains" value="BR=1-195"/>
</dbReference>
<dbReference type="PDBsum" id="8ESQ"/>
<dbReference type="PDBsum" id="8ESR"/>
<dbReference type="PDBsum" id="8ETC"/>
<dbReference type="PDBsum" id="8ETG"/>
<dbReference type="PDBsum" id="8ETH"/>
<dbReference type="PDBsum" id="8ETI"/>
<dbReference type="PDBsum" id="8ETJ"/>
<dbReference type="PDBsum" id="8EUG"/>
<dbReference type="PDBsum" id="8EUI"/>
<dbReference type="PDBsum" id="8EUP"/>
<dbReference type="PDBsum" id="8EUY"/>
<dbReference type="PDBsum" id="8EV3"/>
<dbReference type="PDBsum" id="9AXT"/>
<dbReference type="PDBsum" id="9AXU"/>
<dbReference type="PDBsum" id="9AXV"/>
<dbReference type="EMDB" id="EMD-43972"/>
<dbReference type="EMDB" id="EMD-43973"/>
<dbReference type="EMDB" id="EMD-43976"/>
<dbReference type="SMR" id="P79071"/>
<dbReference type="BioGRID" id="275938">
    <property type="interactions" value="12"/>
</dbReference>
<dbReference type="FunCoup" id="P79071">
    <property type="interactions" value="643"/>
</dbReference>
<dbReference type="IntAct" id="P79071">
    <property type="interactions" value="2"/>
</dbReference>
<dbReference type="STRING" id="284812.P79071"/>
<dbReference type="iPTMnet" id="P79071"/>
<dbReference type="PaxDb" id="4896-SPCC622.18.1"/>
<dbReference type="EnsemblFungi" id="SPCC622.18.1">
    <property type="protein sequence ID" value="SPCC622.18.1:pep"/>
    <property type="gene ID" value="SPCC622.18"/>
</dbReference>
<dbReference type="GeneID" id="2539372"/>
<dbReference type="KEGG" id="spo:2539372"/>
<dbReference type="PomBase" id="SPCC622.18">
    <property type="gene designation" value="rpl6"/>
</dbReference>
<dbReference type="VEuPathDB" id="FungiDB:SPCC622.18"/>
<dbReference type="eggNOG" id="KOG1694">
    <property type="taxonomic scope" value="Eukaryota"/>
</dbReference>
<dbReference type="HOGENOM" id="CLU_066767_2_1_1"/>
<dbReference type="InParanoid" id="P79071"/>
<dbReference type="OMA" id="KWYNADD"/>
<dbReference type="PhylomeDB" id="P79071"/>
<dbReference type="Reactome" id="R-SPO-156827">
    <property type="pathway name" value="L13a-mediated translational silencing of Ceruloplasmin expression"/>
</dbReference>
<dbReference type="Reactome" id="R-SPO-1799339">
    <property type="pathway name" value="SRP-dependent cotranslational protein targeting to membrane"/>
</dbReference>
<dbReference type="Reactome" id="R-SPO-72689">
    <property type="pathway name" value="Formation of a pool of free 40S subunits"/>
</dbReference>
<dbReference type="Reactome" id="R-SPO-72706">
    <property type="pathway name" value="GTP hydrolysis and joining of the 60S ribosomal subunit"/>
</dbReference>
<dbReference type="Reactome" id="R-SPO-975956">
    <property type="pathway name" value="Nonsense Mediated Decay (NMD) independent of the Exon Junction Complex (EJC)"/>
</dbReference>
<dbReference type="Reactome" id="R-SPO-975957">
    <property type="pathway name" value="Nonsense Mediated Decay (NMD) enhanced by the Exon Junction Complex (EJC)"/>
</dbReference>
<dbReference type="PRO" id="PR:P79071"/>
<dbReference type="Proteomes" id="UP000002485">
    <property type="component" value="Chromosome III"/>
</dbReference>
<dbReference type="GO" id="GO:0005829">
    <property type="term" value="C:cytosol"/>
    <property type="evidence" value="ECO:0007005"/>
    <property type="project" value="PomBase"/>
</dbReference>
<dbReference type="GO" id="GO:0022625">
    <property type="term" value="C:cytosolic large ribosomal subunit"/>
    <property type="evidence" value="ECO:0000269"/>
    <property type="project" value="PomBase"/>
</dbReference>
<dbReference type="GO" id="GO:0005730">
    <property type="term" value="C:nucleolus"/>
    <property type="evidence" value="ECO:0007005"/>
    <property type="project" value="PomBase"/>
</dbReference>
<dbReference type="GO" id="GO:0005634">
    <property type="term" value="C:nucleus"/>
    <property type="evidence" value="ECO:0007005"/>
    <property type="project" value="PomBase"/>
</dbReference>
<dbReference type="GO" id="GO:0030684">
    <property type="term" value="C:preribosome"/>
    <property type="evidence" value="ECO:0000314"/>
    <property type="project" value="PomBase"/>
</dbReference>
<dbReference type="GO" id="GO:0003723">
    <property type="term" value="F:RNA binding"/>
    <property type="evidence" value="ECO:0000318"/>
    <property type="project" value="GO_Central"/>
</dbReference>
<dbReference type="GO" id="GO:0003735">
    <property type="term" value="F:structural constituent of ribosome"/>
    <property type="evidence" value="ECO:0000318"/>
    <property type="project" value="GO_Central"/>
</dbReference>
<dbReference type="GO" id="GO:0002181">
    <property type="term" value="P:cytoplasmic translation"/>
    <property type="evidence" value="ECO:0000318"/>
    <property type="project" value="GO_Central"/>
</dbReference>
<dbReference type="GO" id="GO:0042254">
    <property type="term" value="P:ribosome biogenesis"/>
    <property type="evidence" value="ECO:0000266"/>
    <property type="project" value="PomBase"/>
</dbReference>
<dbReference type="CDD" id="cd13156">
    <property type="entry name" value="KOW_RPL6"/>
    <property type="match status" value="1"/>
</dbReference>
<dbReference type="FunFam" id="2.30.30.30:FF:000014">
    <property type="entry name" value="60S ribosomal protein L6"/>
    <property type="match status" value="1"/>
</dbReference>
<dbReference type="Gene3D" id="2.30.30.30">
    <property type="match status" value="1"/>
</dbReference>
<dbReference type="InterPro" id="IPR000915">
    <property type="entry name" value="60S_ribosomal_eL6"/>
</dbReference>
<dbReference type="InterPro" id="IPR014722">
    <property type="entry name" value="Rib_uL2_dom2"/>
</dbReference>
<dbReference type="InterPro" id="IPR049633">
    <property type="entry name" value="Ribosomal_eL6_CS"/>
</dbReference>
<dbReference type="InterPro" id="IPR041997">
    <property type="entry name" value="Ribosomal_eL6_KOW"/>
</dbReference>
<dbReference type="InterPro" id="IPR008991">
    <property type="entry name" value="Translation_prot_SH3-like_sf"/>
</dbReference>
<dbReference type="PANTHER" id="PTHR10715">
    <property type="entry name" value="60S RIBOSOMAL PROTEIN L6"/>
    <property type="match status" value="1"/>
</dbReference>
<dbReference type="PANTHER" id="PTHR10715:SF0">
    <property type="entry name" value="LARGE RIBOSOMAL SUBUNIT PROTEIN EL6"/>
    <property type="match status" value="1"/>
</dbReference>
<dbReference type="Pfam" id="PF01159">
    <property type="entry name" value="Ribosomal_L6e"/>
    <property type="match status" value="1"/>
</dbReference>
<dbReference type="SUPFAM" id="SSF50104">
    <property type="entry name" value="Translation proteins SH3-like domain"/>
    <property type="match status" value="1"/>
</dbReference>
<dbReference type="PROSITE" id="PS01170">
    <property type="entry name" value="RIBOSOMAL_L6E"/>
    <property type="match status" value="1"/>
</dbReference>